<dbReference type="EMBL" id="JH159164">
    <property type="protein sequence ID" value="EGZ06437.1"/>
    <property type="molecule type" value="Genomic_DNA"/>
</dbReference>
<dbReference type="RefSeq" id="XP_009538334.1">
    <property type="nucleotide sequence ID" value="XM_009540039.1"/>
</dbReference>
<dbReference type="SMR" id="G5AE35"/>
<dbReference type="STRING" id="1094619.G5AE35"/>
<dbReference type="GlyCosmos" id="G5AE35">
    <property type="glycosylation" value="1 site, No reported glycans"/>
</dbReference>
<dbReference type="EnsemblProtists" id="EGZ06437">
    <property type="protein sequence ID" value="EGZ06437"/>
    <property type="gene ID" value="PHYSODRAFT_532326"/>
</dbReference>
<dbReference type="GeneID" id="20661728"/>
<dbReference type="KEGG" id="psoj:PHYSODRAFT_532326"/>
<dbReference type="InParanoid" id="G5AE35"/>
<dbReference type="Proteomes" id="UP000002640">
    <property type="component" value="Unassembled WGS sequence"/>
</dbReference>
<dbReference type="GO" id="GO:0005576">
    <property type="term" value="C:extracellular region"/>
    <property type="evidence" value="ECO:0007669"/>
    <property type="project" value="UniProtKB-SubCell"/>
</dbReference>
<dbReference type="GO" id="GO:0004252">
    <property type="term" value="F:serine-type endopeptidase activity"/>
    <property type="evidence" value="ECO:0007669"/>
    <property type="project" value="InterPro"/>
</dbReference>
<dbReference type="GO" id="GO:0006508">
    <property type="term" value="P:proteolysis"/>
    <property type="evidence" value="ECO:0007669"/>
    <property type="project" value="InterPro"/>
</dbReference>
<dbReference type="CDD" id="cd00190">
    <property type="entry name" value="Tryp_SPc"/>
    <property type="match status" value="1"/>
</dbReference>
<dbReference type="FunFam" id="2.40.10.10:FF:000156">
    <property type="entry name" value="MIP06385p"/>
    <property type="match status" value="1"/>
</dbReference>
<dbReference type="Gene3D" id="2.40.10.10">
    <property type="entry name" value="Trypsin-like serine proteases"/>
    <property type="match status" value="1"/>
</dbReference>
<dbReference type="InterPro" id="IPR050430">
    <property type="entry name" value="Peptidase_S1"/>
</dbReference>
<dbReference type="InterPro" id="IPR009003">
    <property type="entry name" value="Peptidase_S1_PA"/>
</dbReference>
<dbReference type="InterPro" id="IPR043504">
    <property type="entry name" value="Peptidase_S1_PA_chymotrypsin"/>
</dbReference>
<dbReference type="InterPro" id="IPR001314">
    <property type="entry name" value="Peptidase_S1A"/>
</dbReference>
<dbReference type="InterPro" id="IPR001254">
    <property type="entry name" value="Trypsin_dom"/>
</dbReference>
<dbReference type="PANTHER" id="PTHR24276:SF98">
    <property type="entry name" value="FI18310P1-RELATED"/>
    <property type="match status" value="1"/>
</dbReference>
<dbReference type="PANTHER" id="PTHR24276">
    <property type="entry name" value="POLYSERASE-RELATED"/>
    <property type="match status" value="1"/>
</dbReference>
<dbReference type="Pfam" id="PF00089">
    <property type="entry name" value="Trypsin"/>
    <property type="match status" value="1"/>
</dbReference>
<dbReference type="PRINTS" id="PR00722">
    <property type="entry name" value="CHYMOTRYPSIN"/>
</dbReference>
<dbReference type="SMART" id="SM00020">
    <property type="entry name" value="Tryp_SPc"/>
    <property type="match status" value="1"/>
</dbReference>
<dbReference type="SUPFAM" id="SSF50494">
    <property type="entry name" value="Trypsin-like serine proteases"/>
    <property type="match status" value="1"/>
</dbReference>
<dbReference type="PROSITE" id="PS50240">
    <property type="entry name" value="TRYPSIN_DOM"/>
    <property type="match status" value="1"/>
</dbReference>
<comment type="function">
    <text evidence="6">Secreted effector that suppresses host plant glucan elicitor-mediated defense responses (Probable). Targets host endoglucanases and inhibits the endoglucanase-mediated release of elicitor-active glucan oligosaccharides from P.sojae cell walls (Probable).</text>
</comment>
<comment type="subcellular location">
    <subcellularLocation>
        <location evidence="6">Secreted</location>
    </subcellularLocation>
</comment>
<comment type="similarity">
    <text evidence="5">Belongs to the peptidase S1 family.</text>
</comment>
<comment type="caution">
    <text evidence="6">None of the predicted glucanase inhibitor proteins (GIPS) has an intact catalytic triad, therefore, GIPs are proteolytically inactive.</text>
</comment>
<name>GIP3_PHYSP</name>
<gene>
    <name type="primary">GIP3</name>
    <name type="ORF">PHYSODRAFT_532326</name>
</gene>
<proteinExistence type="inferred from homology"/>
<accession>G5AE35</accession>
<reference key="1">
    <citation type="journal article" date="2006" name="Science">
        <title>Phytophthora genome sequences uncover evolutionary origins and mechanisms of pathogenesis.</title>
        <authorList>
            <person name="Tyler B.M."/>
            <person name="Tripathy S."/>
            <person name="Zhang X."/>
            <person name="Dehal P."/>
            <person name="Jiang R.H.Y."/>
            <person name="Aerts A."/>
            <person name="Arredondo F.D."/>
            <person name="Baxter L."/>
            <person name="Bensasson D."/>
            <person name="Beynon J.L."/>
            <person name="Chapman J."/>
            <person name="Damasceno C.M.B."/>
            <person name="Dorrance A.E."/>
            <person name="Dou D."/>
            <person name="Dickerman A.W."/>
            <person name="Dubchak I.L."/>
            <person name="Garbelotto M."/>
            <person name="Gijzen M."/>
            <person name="Gordon S.G."/>
            <person name="Govers F."/>
            <person name="Grunwald N.J."/>
            <person name="Huang W."/>
            <person name="Ivors K.L."/>
            <person name="Jones R.W."/>
            <person name="Kamoun S."/>
            <person name="Krampis K."/>
            <person name="Lamour K.H."/>
            <person name="Lee M.-K."/>
            <person name="McDonald W.H."/>
            <person name="Medina M."/>
            <person name="Meijer H.J.G."/>
            <person name="Nordberg E.K."/>
            <person name="Maclean D.J."/>
            <person name="Ospina-Giraldo M.D."/>
            <person name="Morris P.F."/>
            <person name="Phuntumart V."/>
            <person name="Putnam N.H."/>
            <person name="Rash S."/>
            <person name="Rose J.K.C."/>
            <person name="Sakihama Y."/>
            <person name="Salamov A.A."/>
            <person name="Savidor A."/>
            <person name="Scheuring C.F."/>
            <person name="Smith B.M."/>
            <person name="Sobral B.W.S."/>
            <person name="Terry A."/>
            <person name="Torto-Alalibo T.A."/>
            <person name="Win J."/>
            <person name="Xu Z."/>
            <person name="Zhang H."/>
            <person name="Grigoriev I.V."/>
            <person name="Rokhsar D.S."/>
            <person name="Boore J.L."/>
        </authorList>
    </citation>
    <scope>NUCLEOTIDE SEQUENCE [LARGE SCALE GENOMIC DNA]</scope>
    <source>
        <strain>P6497</strain>
    </source>
</reference>
<reference key="2">
    <citation type="journal article" date="2002" name="Plant Cell">
        <title>Molecular cloning and characterization of glucanase inhibitor proteins: coevolution of a counterdefense mechanism by plant pathogens.</title>
        <authorList>
            <person name="Rose J.K."/>
            <person name="Ham K.S."/>
            <person name="Darvill A.G."/>
            <person name="Albersheim P."/>
        </authorList>
    </citation>
    <scope>IDENTIFICATION</scope>
</reference>
<feature type="signal peptide" evidence="1">
    <location>
        <begin position="1"/>
        <end position="21"/>
    </location>
</feature>
<feature type="chain" id="PRO_5003473302" description="Glucanase inhibitor protein 3" evidence="1">
    <location>
        <begin position="22"/>
        <end position="261"/>
    </location>
</feature>
<feature type="domain" description="Peptidase S1" evidence="2">
    <location>
        <begin position="29"/>
        <end position="260"/>
    </location>
</feature>
<feature type="glycosylation site" description="N-linked (GlcNAc...) asparagine" evidence="3">
    <location>
        <position position="108"/>
    </location>
</feature>
<feature type="disulfide bond" evidence="2">
    <location>
        <begin position="56"/>
        <end position="72"/>
    </location>
</feature>
<feature type="disulfide bond" evidence="2">
    <location>
        <begin position="183"/>
        <end position="195"/>
    </location>
</feature>
<feature type="disulfide bond" evidence="2">
    <location>
        <begin position="205"/>
        <end position="236"/>
    </location>
</feature>
<sequence length="261" mass="27446">MKVLSSLAAALIALSAVDVEAEHVQRSLILGGGKVPVGSKTYTVGLRTTPEGDTFCGGALISPTHVLTTASCTAYEEGSSIPHWVAVGTHYLNGKKDGEQLKIVSAQNHTLYDASSFSYNLAVLTLEKPSKFAPIKLPKADGSDIFPRVWSKVMGWGVTSYPNGKPSNELQSVDVRVWGDNACENKLGVDKSSLCAGGEAGKDSCVGDTGDPLIKENGRGDADDILLGLSGWGTGCGDKDMPSVYSRVSAGIEWINSVIKK</sequence>
<evidence type="ECO:0000255" key="1"/>
<evidence type="ECO:0000255" key="2">
    <source>
        <dbReference type="PROSITE-ProRule" id="PRU00274"/>
    </source>
</evidence>
<evidence type="ECO:0000255" key="3">
    <source>
        <dbReference type="PROSITE-ProRule" id="PRU00498"/>
    </source>
</evidence>
<evidence type="ECO:0000303" key="4">
    <source>
    </source>
</evidence>
<evidence type="ECO:0000305" key="5"/>
<evidence type="ECO:0000305" key="6">
    <source>
    </source>
</evidence>
<protein>
    <recommendedName>
        <fullName evidence="4">Glucanase inhibitor protein 3</fullName>
    </recommendedName>
</protein>
<keyword id="KW-1015">Disulfide bond</keyword>
<keyword id="KW-0325">Glycoprotein</keyword>
<keyword id="KW-1185">Reference proteome</keyword>
<keyword id="KW-0964">Secreted</keyword>
<keyword id="KW-0732">Signal</keyword>
<keyword id="KW-0843">Virulence</keyword>
<organism>
    <name type="scientific">Phytophthora sojae (strain P6497)</name>
    <name type="common">Soybean stem and root rot agent</name>
    <name type="synonym">Phytophthora megasperma f. sp. glycines</name>
    <dbReference type="NCBI Taxonomy" id="1094619"/>
    <lineage>
        <taxon>Eukaryota</taxon>
        <taxon>Sar</taxon>
        <taxon>Stramenopiles</taxon>
        <taxon>Oomycota</taxon>
        <taxon>Peronosporales</taxon>
        <taxon>Peronosporaceae</taxon>
        <taxon>Phytophthora</taxon>
    </lineage>
</organism>